<gene>
    <name evidence="1" type="primary">glgC</name>
    <name type="ordered locus">Ent638_3838</name>
</gene>
<organism>
    <name type="scientific">Enterobacter sp. (strain 638)</name>
    <dbReference type="NCBI Taxonomy" id="399742"/>
    <lineage>
        <taxon>Bacteria</taxon>
        <taxon>Pseudomonadati</taxon>
        <taxon>Pseudomonadota</taxon>
        <taxon>Gammaproteobacteria</taxon>
        <taxon>Enterobacterales</taxon>
        <taxon>Enterobacteriaceae</taxon>
        <taxon>Enterobacter</taxon>
    </lineage>
</organism>
<accession>A4WFL3</accession>
<name>GLGC_ENT38</name>
<proteinExistence type="inferred from homology"/>
<reference key="1">
    <citation type="journal article" date="2010" name="PLoS Genet.">
        <title>Genome sequence of the plant growth promoting endophytic bacterium Enterobacter sp. 638.</title>
        <authorList>
            <person name="Taghavi S."/>
            <person name="van der Lelie D."/>
            <person name="Hoffman A."/>
            <person name="Zhang Y.B."/>
            <person name="Walla M.D."/>
            <person name="Vangronsveld J."/>
            <person name="Newman L."/>
            <person name="Monchy S."/>
        </authorList>
    </citation>
    <scope>NUCLEOTIDE SEQUENCE [LARGE SCALE GENOMIC DNA]</scope>
    <source>
        <strain>638</strain>
    </source>
</reference>
<feature type="chain" id="PRO_1000061385" description="Glucose-1-phosphate adenylyltransferase">
    <location>
        <begin position="1"/>
        <end position="431"/>
    </location>
</feature>
<feature type="binding site" evidence="1">
    <location>
        <position position="39"/>
    </location>
    <ligand>
        <name>beta-D-fructose 1,6-bisphosphate</name>
        <dbReference type="ChEBI" id="CHEBI:32966"/>
    </ligand>
</feature>
<feature type="binding site" evidence="1">
    <location>
        <position position="40"/>
    </location>
    <ligand>
        <name>AMP</name>
        <dbReference type="ChEBI" id="CHEBI:456215"/>
    </ligand>
</feature>
<feature type="binding site" evidence="1">
    <location>
        <position position="46"/>
    </location>
    <ligand>
        <name>AMP</name>
        <dbReference type="ChEBI" id="CHEBI:456215"/>
    </ligand>
</feature>
<feature type="binding site" evidence="1">
    <location>
        <position position="52"/>
    </location>
    <ligand>
        <name>AMP</name>
        <dbReference type="ChEBI" id="CHEBI:456215"/>
    </ligand>
</feature>
<feature type="binding site" evidence="1">
    <location>
        <position position="114"/>
    </location>
    <ligand>
        <name>alpha-D-glucose 1-phosphate</name>
        <dbReference type="ChEBI" id="CHEBI:58601"/>
    </ligand>
</feature>
<feature type="binding site" evidence="1">
    <location>
        <position position="130"/>
    </location>
    <ligand>
        <name>AMP</name>
        <dbReference type="ChEBI" id="CHEBI:456215"/>
    </ligand>
</feature>
<feature type="binding site" evidence="1">
    <location>
        <position position="179"/>
    </location>
    <ligand>
        <name>alpha-D-glucose 1-phosphate</name>
        <dbReference type="ChEBI" id="CHEBI:58601"/>
    </ligand>
</feature>
<feature type="binding site" evidence="1">
    <location>
        <begin position="194"/>
        <end position="195"/>
    </location>
    <ligand>
        <name>alpha-D-glucose 1-phosphate</name>
        <dbReference type="ChEBI" id="CHEBI:58601"/>
    </ligand>
</feature>
<feature type="binding site" evidence="1">
    <location>
        <position position="212"/>
    </location>
    <ligand>
        <name>alpha-D-glucose 1-phosphate</name>
        <dbReference type="ChEBI" id="CHEBI:58601"/>
    </ligand>
</feature>
<feature type="binding site" evidence="1">
    <location>
        <position position="386"/>
    </location>
    <ligand>
        <name>AMP</name>
        <dbReference type="ChEBI" id="CHEBI:456215"/>
    </ligand>
</feature>
<feature type="binding site" evidence="1">
    <location>
        <begin position="419"/>
        <end position="423"/>
    </location>
    <ligand>
        <name>beta-D-fructose 1,6-bisphosphate</name>
        <dbReference type="ChEBI" id="CHEBI:32966"/>
    </ligand>
</feature>
<feature type="binding site" evidence="1">
    <location>
        <begin position="429"/>
        <end position="431"/>
    </location>
    <ligand>
        <name>beta-D-fructose 1,6-bisphosphate</name>
        <dbReference type="ChEBI" id="CHEBI:32966"/>
    </ligand>
</feature>
<feature type="site" description="Could play a key role in the communication between the regulatory and the substrate sites" evidence="1">
    <location>
        <position position="74"/>
    </location>
</feature>
<feature type="site" description="Could play a key role in the communication between the regulatory and the substrate sites" evidence="1">
    <location>
        <position position="113"/>
    </location>
</feature>
<keyword id="KW-0021">Allosteric enzyme</keyword>
<keyword id="KW-0067">ATP-binding</keyword>
<keyword id="KW-0119">Carbohydrate metabolism</keyword>
<keyword id="KW-0320">Glycogen biosynthesis</keyword>
<keyword id="KW-0321">Glycogen metabolism</keyword>
<keyword id="KW-0547">Nucleotide-binding</keyword>
<keyword id="KW-0548">Nucleotidyltransferase</keyword>
<keyword id="KW-0808">Transferase</keyword>
<sequence>MVRLEKNDPLMLARQLPLKTVALILAGGRGTRLKDLTIKRAKPAVHFGGKFRIIDFALSNCLNSGIRRIGVITQYQSHTLVQHIQRGWSFFSEEMNEFVDLLPAQQRVHGENWYRGTADAVTQNLDIIRRYGAEYIVILAGDHIYKQDYSHMLIDHVEKGARCTVACLPVPVAEAAAFGVMDVDENDLIIDFVEKPANPPTMPSDPTKSLASMGIYIFDAEYLYDLLEEDDKDENSSHDFGKDIIPKITKAGMAYAHPFPLSCVQSDPTAEPYWRDVGTLEAYWKANLDLASVTPELDMYDQNWPIRTHMESLPPAKFVQDRSGSHGMTLNSLVSGGCIISGSVVVQSVLFPRVRINSFCNIDSSVLLPDVWIGRSCRLRRCVIDRACIIPEGMVIGENAEEDARRFYRSEEGIVLVTREMLRKLQIKQER</sequence>
<dbReference type="EC" id="2.7.7.27" evidence="1"/>
<dbReference type="EMBL" id="CP000653">
    <property type="protein sequence ID" value="ABP62493.1"/>
    <property type="molecule type" value="Genomic_DNA"/>
</dbReference>
<dbReference type="RefSeq" id="WP_015960798.1">
    <property type="nucleotide sequence ID" value="NC_009436.1"/>
</dbReference>
<dbReference type="SMR" id="A4WFL3"/>
<dbReference type="STRING" id="399742.Ent638_3838"/>
<dbReference type="KEGG" id="ent:Ent638_3838"/>
<dbReference type="eggNOG" id="COG0448">
    <property type="taxonomic scope" value="Bacteria"/>
</dbReference>
<dbReference type="HOGENOM" id="CLU_029499_14_1_6"/>
<dbReference type="OrthoDB" id="9801810at2"/>
<dbReference type="UniPathway" id="UPA00164"/>
<dbReference type="Proteomes" id="UP000000230">
    <property type="component" value="Chromosome"/>
</dbReference>
<dbReference type="GO" id="GO:0005524">
    <property type="term" value="F:ATP binding"/>
    <property type="evidence" value="ECO:0007669"/>
    <property type="project" value="UniProtKB-KW"/>
</dbReference>
<dbReference type="GO" id="GO:0008878">
    <property type="term" value="F:glucose-1-phosphate adenylyltransferase activity"/>
    <property type="evidence" value="ECO:0007669"/>
    <property type="project" value="UniProtKB-UniRule"/>
</dbReference>
<dbReference type="GO" id="GO:0005978">
    <property type="term" value="P:glycogen biosynthetic process"/>
    <property type="evidence" value="ECO:0007669"/>
    <property type="project" value="UniProtKB-UniRule"/>
</dbReference>
<dbReference type="CDD" id="cd02508">
    <property type="entry name" value="ADP_Glucose_PP"/>
    <property type="match status" value="1"/>
</dbReference>
<dbReference type="CDD" id="cd04651">
    <property type="entry name" value="LbH_G1P_AT_C"/>
    <property type="match status" value="1"/>
</dbReference>
<dbReference type="FunFam" id="2.160.10.10:FF:000006">
    <property type="entry name" value="Glucose-1-phosphate adenylyltransferase"/>
    <property type="match status" value="1"/>
</dbReference>
<dbReference type="FunFam" id="3.90.550.10:FF:000014">
    <property type="entry name" value="Glucose-1-phosphate adenylyltransferase"/>
    <property type="match status" value="1"/>
</dbReference>
<dbReference type="Gene3D" id="2.160.10.10">
    <property type="entry name" value="Hexapeptide repeat proteins"/>
    <property type="match status" value="1"/>
</dbReference>
<dbReference type="Gene3D" id="3.90.550.10">
    <property type="entry name" value="Spore Coat Polysaccharide Biosynthesis Protein SpsA, Chain A"/>
    <property type="match status" value="1"/>
</dbReference>
<dbReference type="HAMAP" id="MF_00624">
    <property type="entry name" value="GlgC"/>
    <property type="match status" value="1"/>
</dbReference>
<dbReference type="InterPro" id="IPR011831">
    <property type="entry name" value="ADP-Glc_PPase"/>
</dbReference>
<dbReference type="InterPro" id="IPR005836">
    <property type="entry name" value="ADP_Glu_pyroP_CS"/>
</dbReference>
<dbReference type="InterPro" id="IPR023049">
    <property type="entry name" value="GlgC_bac"/>
</dbReference>
<dbReference type="InterPro" id="IPR056818">
    <property type="entry name" value="GlmU/GlgC-like_hexapep"/>
</dbReference>
<dbReference type="InterPro" id="IPR005835">
    <property type="entry name" value="NTP_transferase_dom"/>
</dbReference>
<dbReference type="InterPro" id="IPR029044">
    <property type="entry name" value="Nucleotide-diphossugar_trans"/>
</dbReference>
<dbReference type="InterPro" id="IPR011004">
    <property type="entry name" value="Trimer_LpxA-like_sf"/>
</dbReference>
<dbReference type="NCBIfam" id="TIGR02091">
    <property type="entry name" value="glgC"/>
    <property type="match status" value="1"/>
</dbReference>
<dbReference type="NCBIfam" id="NF001947">
    <property type="entry name" value="PRK00725.1"/>
    <property type="match status" value="1"/>
</dbReference>
<dbReference type="NCBIfam" id="NF002023">
    <property type="entry name" value="PRK00844.1"/>
    <property type="match status" value="1"/>
</dbReference>
<dbReference type="PANTHER" id="PTHR43523:SF2">
    <property type="entry name" value="GLUCOSE-1-PHOSPHATE ADENYLYLTRANSFERASE"/>
    <property type="match status" value="1"/>
</dbReference>
<dbReference type="PANTHER" id="PTHR43523">
    <property type="entry name" value="GLUCOSE-1-PHOSPHATE ADENYLYLTRANSFERASE-RELATED"/>
    <property type="match status" value="1"/>
</dbReference>
<dbReference type="Pfam" id="PF24894">
    <property type="entry name" value="Hexapep_GlmU"/>
    <property type="match status" value="1"/>
</dbReference>
<dbReference type="Pfam" id="PF00483">
    <property type="entry name" value="NTP_transferase"/>
    <property type="match status" value="1"/>
</dbReference>
<dbReference type="SUPFAM" id="SSF53448">
    <property type="entry name" value="Nucleotide-diphospho-sugar transferases"/>
    <property type="match status" value="1"/>
</dbReference>
<dbReference type="SUPFAM" id="SSF51161">
    <property type="entry name" value="Trimeric LpxA-like enzymes"/>
    <property type="match status" value="1"/>
</dbReference>
<dbReference type="PROSITE" id="PS00808">
    <property type="entry name" value="ADP_GLC_PYROPHOSPH_1"/>
    <property type="match status" value="1"/>
</dbReference>
<dbReference type="PROSITE" id="PS00809">
    <property type="entry name" value="ADP_GLC_PYROPHOSPH_2"/>
    <property type="match status" value="1"/>
</dbReference>
<dbReference type="PROSITE" id="PS00810">
    <property type="entry name" value="ADP_GLC_PYROPHOSPH_3"/>
    <property type="match status" value="1"/>
</dbReference>
<comment type="function">
    <text evidence="1">Involved in the biosynthesis of ADP-glucose, a building block required for the elongation reactions to produce glycogen. Catalyzes the reaction between ATP and alpha-D-glucose 1-phosphate (G1P) to produce pyrophosphate and ADP-Glc.</text>
</comment>
<comment type="catalytic activity">
    <reaction evidence="1">
        <text>alpha-D-glucose 1-phosphate + ATP + H(+) = ADP-alpha-D-glucose + diphosphate</text>
        <dbReference type="Rhea" id="RHEA:12120"/>
        <dbReference type="ChEBI" id="CHEBI:15378"/>
        <dbReference type="ChEBI" id="CHEBI:30616"/>
        <dbReference type="ChEBI" id="CHEBI:33019"/>
        <dbReference type="ChEBI" id="CHEBI:57498"/>
        <dbReference type="ChEBI" id="CHEBI:58601"/>
        <dbReference type="EC" id="2.7.7.27"/>
    </reaction>
</comment>
<comment type="activity regulation">
    <text evidence="1">Allosterically activated by fructose-1,6-bisphosphate (F16BP) and inhibited by AMP.</text>
</comment>
<comment type="pathway">
    <text evidence="1">Glycan biosynthesis; glycogen biosynthesis.</text>
</comment>
<comment type="subunit">
    <text evidence="1">Homotetramer.</text>
</comment>
<comment type="similarity">
    <text evidence="1">Belongs to the bacterial/plant glucose-1-phosphate adenylyltransferase family.</text>
</comment>
<protein>
    <recommendedName>
        <fullName evidence="1">Glucose-1-phosphate adenylyltransferase</fullName>
        <ecNumber evidence="1">2.7.7.27</ecNumber>
    </recommendedName>
    <alternativeName>
        <fullName evidence="1">ADP-glucose pyrophosphorylase</fullName>
        <shortName evidence="1">ADPGlc PPase</shortName>
    </alternativeName>
    <alternativeName>
        <fullName evidence="1">ADP-glucose synthase</fullName>
    </alternativeName>
</protein>
<evidence type="ECO:0000255" key="1">
    <source>
        <dbReference type="HAMAP-Rule" id="MF_00624"/>
    </source>
</evidence>